<comment type="function">
    <text evidence="1">This protein is an aporepressor. When complexed with L-tryptophan it binds the operator region of the trp operon (5'-ACTAGT-'3') and prevents the initiation of transcription. The complex also regulates trp repressor biosynthesis by binding to its regulatory region.</text>
</comment>
<comment type="subunit">
    <text evidence="1">Homodimer.</text>
</comment>
<comment type="subcellular location">
    <subcellularLocation>
        <location evidence="1">Cytoplasm</location>
    </subcellularLocation>
</comment>
<comment type="similarity">
    <text evidence="1">Belongs to the TrpR family.</text>
</comment>
<sequence length="108" mass="12405">MAQQSPYSAAMAEQRHQEWLRFVDLLKNAYQNDLHLPLLNLMLTPDEREALGTRVRIVEELLRGEMSQRELKNELGAGIATITRGSNSLKAAPVELRQWLEEVLLKDH</sequence>
<proteinExistence type="inferred from homology"/>
<feature type="chain" id="PRO_1000197145" description="Trp operon repressor">
    <location>
        <begin position="1"/>
        <end position="108"/>
    </location>
</feature>
<feature type="DNA-binding region" evidence="1">
    <location>
        <begin position="68"/>
        <end position="91"/>
    </location>
</feature>
<accession>B7NH68</accession>
<protein>
    <recommendedName>
        <fullName evidence="1">Trp operon repressor</fullName>
    </recommendedName>
</protein>
<name>TRPR_ECOLU</name>
<dbReference type="EMBL" id="CU928163">
    <property type="protein sequence ID" value="CAR16133.1"/>
    <property type="molecule type" value="Genomic_DNA"/>
</dbReference>
<dbReference type="RefSeq" id="WP_000068678.1">
    <property type="nucleotide sequence ID" value="NC_011751.1"/>
</dbReference>
<dbReference type="RefSeq" id="YP_002415597.1">
    <property type="nucleotide sequence ID" value="NC_011751.1"/>
</dbReference>
<dbReference type="SMR" id="B7NH68"/>
<dbReference type="STRING" id="585056.ECUMN_5024"/>
<dbReference type="GeneID" id="75058921"/>
<dbReference type="KEGG" id="eum:ECUMN_5024"/>
<dbReference type="PATRIC" id="fig|585056.7.peg.5189"/>
<dbReference type="HOGENOM" id="CLU_147939_0_0_6"/>
<dbReference type="Proteomes" id="UP000007097">
    <property type="component" value="Chromosome"/>
</dbReference>
<dbReference type="GO" id="GO:0005737">
    <property type="term" value="C:cytoplasm"/>
    <property type="evidence" value="ECO:0007669"/>
    <property type="project" value="UniProtKB-SubCell"/>
</dbReference>
<dbReference type="GO" id="GO:0003700">
    <property type="term" value="F:DNA-binding transcription factor activity"/>
    <property type="evidence" value="ECO:0007669"/>
    <property type="project" value="InterPro"/>
</dbReference>
<dbReference type="GO" id="GO:0043565">
    <property type="term" value="F:sequence-specific DNA binding"/>
    <property type="evidence" value="ECO:0007669"/>
    <property type="project" value="InterPro"/>
</dbReference>
<dbReference type="GO" id="GO:0045892">
    <property type="term" value="P:negative regulation of DNA-templated transcription"/>
    <property type="evidence" value="ECO:0007669"/>
    <property type="project" value="UniProtKB-UniRule"/>
</dbReference>
<dbReference type="FunFam" id="1.10.1270.10:FF:000001">
    <property type="entry name" value="Trp operon repressor"/>
    <property type="match status" value="1"/>
</dbReference>
<dbReference type="Gene3D" id="1.10.1270.10">
    <property type="entry name" value="TrpR-like"/>
    <property type="match status" value="1"/>
</dbReference>
<dbReference type="HAMAP" id="MF_00475">
    <property type="entry name" value="Trp_repressor"/>
    <property type="match status" value="1"/>
</dbReference>
<dbReference type="InterPro" id="IPR000831">
    <property type="entry name" value="Trp_repress"/>
</dbReference>
<dbReference type="InterPro" id="IPR013335">
    <property type="entry name" value="Trp_repress_bac"/>
</dbReference>
<dbReference type="InterPro" id="IPR010921">
    <property type="entry name" value="Trp_repressor/repl_initiator"/>
</dbReference>
<dbReference type="InterPro" id="IPR038116">
    <property type="entry name" value="TrpR-like_sf"/>
</dbReference>
<dbReference type="NCBIfam" id="TIGR01321">
    <property type="entry name" value="TrpR"/>
    <property type="match status" value="1"/>
</dbReference>
<dbReference type="PANTHER" id="PTHR38025">
    <property type="entry name" value="TRP OPERON REPRESSOR"/>
    <property type="match status" value="1"/>
</dbReference>
<dbReference type="PANTHER" id="PTHR38025:SF1">
    <property type="entry name" value="TRP OPERON REPRESSOR"/>
    <property type="match status" value="1"/>
</dbReference>
<dbReference type="Pfam" id="PF01371">
    <property type="entry name" value="Trp_repressor"/>
    <property type="match status" value="1"/>
</dbReference>
<dbReference type="PIRSF" id="PIRSF003196">
    <property type="entry name" value="Trp_repressor"/>
    <property type="match status" value="1"/>
</dbReference>
<dbReference type="SUPFAM" id="SSF48295">
    <property type="entry name" value="TrpR-like"/>
    <property type="match status" value="1"/>
</dbReference>
<reference key="1">
    <citation type="journal article" date="2009" name="PLoS Genet.">
        <title>Organised genome dynamics in the Escherichia coli species results in highly diverse adaptive paths.</title>
        <authorList>
            <person name="Touchon M."/>
            <person name="Hoede C."/>
            <person name="Tenaillon O."/>
            <person name="Barbe V."/>
            <person name="Baeriswyl S."/>
            <person name="Bidet P."/>
            <person name="Bingen E."/>
            <person name="Bonacorsi S."/>
            <person name="Bouchier C."/>
            <person name="Bouvet O."/>
            <person name="Calteau A."/>
            <person name="Chiapello H."/>
            <person name="Clermont O."/>
            <person name="Cruveiller S."/>
            <person name="Danchin A."/>
            <person name="Diard M."/>
            <person name="Dossat C."/>
            <person name="Karoui M.E."/>
            <person name="Frapy E."/>
            <person name="Garry L."/>
            <person name="Ghigo J.M."/>
            <person name="Gilles A.M."/>
            <person name="Johnson J."/>
            <person name="Le Bouguenec C."/>
            <person name="Lescat M."/>
            <person name="Mangenot S."/>
            <person name="Martinez-Jehanne V."/>
            <person name="Matic I."/>
            <person name="Nassif X."/>
            <person name="Oztas S."/>
            <person name="Petit M.A."/>
            <person name="Pichon C."/>
            <person name="Rouy Z."/>
            <person name="Ruf C.S."/>
            <person name="Schneider D."/>
            <person name="Tourret J."/>
            <person name="Vacherie B."/>
            <person name="Vallenet D."/>
            <person name="Medigue C."/>
            <person name="Rocha E.P.C."/>
            <person name="Denamur E."/>
        </authorList>
    </citation>
    <scope>NUCLEOTIDE SEQUENCE [LARGE SCALE GENOMIC DNA]</scope>
    <source>
        <strain>UMN026 / ExPEC</strain>
    </source>
</reference>
<organism>
    <name type="scientific">Escherichia coli O17:K52:H18 (strain UMN026 / ExPEC)</name>
    <dbReference type="NCBI Taxonomy" id="585056"/>
    <lineage>
        <taxon>Bacteria</taxon>
        <taxon>Pseudomonadati</taxon>
        <taxon>Pseudomonadota</taxon>
        <taxon>Gammaproteobacteria</taxon>
        <taxon>Enterobacterales</taxon>
        <taxon>Enterobacteriaceae</taxon>
        <taxon>Escherichia</taxon>
    </lineage>
</organism>
<gene>
    <name evidence="1" type="primary">trpR</name>
    <name type="ordered locus">ECUMN_5024</name>
</gene>
<evidence type="ECO:0000255" key="1">
    <source>
        <dbReference type="HAMAP-Rule" id="MF_00475"/>
    </source>
</evidence>
<keyword id="KW-0963">Cytoplasm</keyword>
<keyword id="KW-0238">DNA-binding</keyword>
<keyword id="KW-0678">Repressor</keyword>
<keyword id="KW-0804">Transcription</keyword>
<keyword id="KW-0805">Transcription regulation</keyword>